<sequence>MTKKVYHQYWFWYLAAFVVFLLDQGSKHWIEAAFDYNETKVFTSFFNFTLRYNPGAAFSFLADAGGWQRWFFTIVAVAASVLLIVWICRVASSKPREAFALSFILGGAVGNLYDRIIHGHVVDFIVVHYQDYYWPAFNLADAAISLGAMVLIADLFINPDKTSGEKPTNA</sequence>
<organism>
    <name type="scientific">Cellvibrio japonicus (strain Ueda107)</name>
    <name type="common">Pseudomonas fluorescens subsp. cellulosa</name>
    <dbReference type="NCBI Taxonomy" id="498211"/>
    <lineage>
        <taxon>Bacteria</taxon>
        <taxon>Pseudomonadati</taxon>
        <taxon>Pseudomonadota</taxon>
        <taxon>Gammaproteobacteria</taxon>
        <taxon>Cellvibrionales</taxon>
        <taxon>Cellvibrionaceae</taxon>
        <taxon>Cellvibrio</taxon>
    </lineage>
</organism>
<gene>
    <name evidence="1" type="primary">lspA</name>
    <name type="ordered locus">CJA_3216</name>
</gene>
<proteinExistence type="inferred from homology"/>
<dbReference type="EC" id="3.4.23.36" evidence="1"/>
<dbReference type="EMBL" id="CP000934">
    <property type="protein sequence ID" value="ACE86004.1"/>
    <property type="molecule type" value="Genomic_DNA"/>
</dbReference>
<dbReference type="RefSeq" id="WP_012488793.1">
    <property type="nucleotide sequence ID" value="NC_010995.1"/>
</dbReference>
<dbReference type="SMR" id="B3PE13"/>
<dbReference type="STRING" id="498211.CJA_3216"/>
<dbReference type="KEGG" id="cja:CJA_3216"/>
<dbReference type="eggNOG" id="COG0597">
    <property type="taxonomic scope" value="Bacteria"/>
</dbReference>
<dbReference type="HOGENOM" id="CLU_083252_4_0_6"/>
<dbReference type="OrthoDB" id="9810259at2"/>
<dbReference type="UniPathway" id="UPA00665"/>
<dbReference type="Proteomes" id="UP000001036">
    <property type="component" value="Chromosome"/>
</dbReference>
<dbReference type="GO" id="GO:0005886">
    <property type="term" value="C:plasma membrane"/>
    <property type="evidence" value="ECO:0007669"/>
    <property type="project" value="UniProtKB-SubCell"/>
</dbReference>
<dbReference type="GO" id="GO:0004190">
    <property type="term" value="F:aspartic-type endopeptidase activity"/>
    <property type="evidence" value="ECO:0007669"/>
    <property type="project" value="UniProtKB-UniRule"/>
</dbReference>
<dbReference type="GO" id="GO:0006508">
    <property type="term" value="P:proteolysis"/>
    <property type="evidence" value="ECO:0007669"/>
    <property type="project" value="UniProtKB-KW"/>
</dbReference>
<dbReference type="HAMAP" id="MF_00161">
    <property type="entry name" value="LspA"/>
    <property type="match status" value="1"/>
</dbReference>
<dbReference type="InterPro" id="IPR001872">
    <property type="entry name" value="Peptidase_A8"/>
</dbReference>
<dbReference type="NCBIfam" id="TIGR00077">
    <property type="entry name" value="lspA"/>
    <property type="match status" value="1"/>
</dbReference>
<dbReference type="PANTHER" id="PTHR33695">
    <property type="entry name" value="LIPOPROTEIN SIGNAL PEPTIDASE"/>
    <property type="match status" value="1"/>
</dbReference>
<dbReference type="PANTHER" id="PTHR33695:SF1">
    <property type="entry name" value="LIPOPROTEIN SIGNAL PEPTIDASE"/>
    <property type="match status" value="1"/>
</dbReference>
<dbReference type="Pfam" id="PF01252">
    <property type="entry name" value="Peptidase_A8"/>
    <property type="match status" value="1"/>
</dbReference>
<dbReference type="PRINTS" id="PR00781">
    <property type="entry name" value="LIPOSIGPTASE"/>
</dbReference>
<dbReference type="PROSITE" id="PS00855">
    <property type="entry name" value="SPASE_II"/>
    <property type="match status" value="1"/>
</dbReference>
<feature type="chain" id="PRO_1000190796" description="Lipoprotein signal peptidase">
    <location>
        <begin position="1"/>
        <end position="170"/>
    </location>
</feature>
<feature type="transmembrane region" description="Helical" evidence="1">
    <location>
        <begin position="5"/>
        <end position="25"/>
    </location>
</feature>
<feature type="transmembrane region" description="Helical" evidence="1">
    <location>
        <begin position="70"/>
        <end position="90"/>
    </location>
</feature>
<feature type="transmembrane region" description="Helical" evidence="1">
    <location>
        <begin position="98"/>
        <end position="118"/>
    </location>
</feature>
<feature type="transmembrane region" description="Helical" evidence="1">
    <location>
        <begin position="137"/>
        <end position="157"/>
    </location>
</feature>
<feature type="active site" evidence="1">
    <location>
        <position position="123"/>
    </location>
</feature>
<feature type="active site" evidence="1">
    <location>
        <position position="141"/>
    </location>
</feature>
<protein>
    <recommendedName>
        <fullName evidence="1">Lipoprotein signal peptidase</fullName>
        <ecNumber evidence="1">3.4.23.36</ecNumber>
    </recommendedName>
    <alternativeName>
        <fullName evidence="1">Prolipoprotein signal peptidase</fullName>
    </alternativeName>
    <alternativeName>
        <fullName evidence="1">Signal peptidase II</fullName>
        <shortName evidence="1">SPase II</shortName>
    </alternativeName>
</protein>
<name>LSPA_CELJU</name>
<comment type="function">
    <text evidence="1">This protein specifically catalyzes the removal of signal peptides from prolipoproteins.</text>
</comment>
<comment type="catalytic activity">
    <reaction evidence="1">
        <text>Release of signal peptides from bacterial membrane prolipoproteins. Hydrolyzes -Xaa-Yaa-Zaa-|-(S,diacylglyceryl)Cys-, in which Xaa is hydrophobic (preferably Leu), and Yaa (Ala or Ser) and Zaa (Gly or Ala) have small, neutral side chains.</text>
        <dbReference type="EC" id="3.4.23.36"/>
    </reaction>
</comment>
<comment type="pathway">
    <text evidence="1">Protein modification; lipoprotein biosynthesis (signal peptide cleavage).</text>
</comment>
<comment type="subcellular location">
    <subcellularLocation>
        <location evidence="1">Cell inner membrane</location>
        <topology evidence="1">Multi-pass membrane protein</topology>
    </subcellularLocation>
</comment>
<comment type="similarity">
    <text evidence="1">Belongs to the peptidase A8 family.</text>
</comment>
<keyword id="KW-0064">Aspartyl protease</keyword>
<keyword id="KW-0997">Cell inner membrane</keyword>
<keyword id="KW-1003">Cell membrane</keyword>
<keyword id="KW-0378">Hydrolase</keyword>
<keyword id="KW-0472">Membrane</keyword>
<keyword id="KW-0645">Protease</keyword>
<keyword id="KW-1185">Reference proteome</keyword>
<keyword id="KW-0812">Transmembrane</keyword>
<keyword id="KW-1133">Transmembrane helix</keyword>
<reference key="1">
    <citation type="journal article" date="2008" name="J. Bacteriol.">
        <title>Insights into plant cell wall degradation from the genome sequence of the soil bacterium Cellvibrio japonicus.</title>
        <authorList>
            <person name="DeBoy R.T."/>
            <person name="Mongodin E.F."/>
            <person name="Fouts D.E."/>
            <person name="Tailford L.E."/>
            <person name="Khouri H."/>
            <person name="Emerson J.B."/>
            <person name="Mohamoud Y."/>
            <person name="Watkins K."/>
            <person name="Henrissat B."/>
            <person name="Gilbert H.J."/>
            <person name="Nelson K.E."/>
        </authorList>
    </citation>
    <scope>NUCLEOTIDE SEQUENCE [LARGE SCALE GENOMIC DNA]</scope>
    <source>
        <strain>Ueda107</strain>
    </source>
</reference>
<accession>B3PE13</accession>
<evidence type="ECO:0000255" key="1">
    <source>
        <dbReference type="HAMAP-Rule" id="MF_00161"/>
    </source>
</evidence>